<evidence type="ECO:0000255" key="1">
    <source>
        <dbReference type="HAMAP-Rule" id="MF_00746"/>
    </source>
</evidence>
<comment type="cofactor">
    <cofactor evidence="1">
        <name>Zn(2+)</name>
        <dbReference type="ChEBI" id="CHEBI:29105"/>
    </cofactor>
    <text evidence="1">Binds 1 zinc ion.</text>
</comment>
<comment type="subcellular location">
    <subcellularLocation>
        <location evidence="1">Cytoplasm</location>
    </subcellularLocation>
</comment>
<comment type="similarity">
    <text evidence="1">Belongs to the SprT family.</text>
</comment>
<protein>
    <recommendedName>
        <fullName evidence="1">Protein SprT</fullName>
    </recommendedName>
</protein>
<keyword id="KW-0963">Cytoplasm</keyword>
<keyword id="KW-0479">Metal-binding</keyword>
<keyword id="KW-0862">Zinc</keyword>
<reference key="1">
    <citation type="journal article" date="2009" name="Genome Biol.">
        <title>Genomic and genetic analyses of diversity and plant interactions of Pseudomonas fluorescens.</title>
        <authorList>
            <person name="Silby M.W."/>
            <person name="Cerdeno-Tarraga A.M."/>
            <person name="Vernikos G.S."/>
            <person name="Giddens S.R."/>
            <person name="Jackson R.W."/>
            <person name="Preston G.M."/>
            <person name="Zhang X.-X."/>
            <person name="Moon C.D."/>
            <person name="Gehrig S.M."/>
            <person name="Godfrey S.A.C."/>
            <person name="Knight C.G."/>
            <person name="Malone J.G."/>
            <person name="Robinson Z."/>
            <person name="Spiers A.J."/>
            <person name="Harris S."/>
            <person name="Challis G.L."/>
            <person name="Yaxley A.M."/>
            <person name="Harris D."/>
            <person name="Seeger K."/>
            <person name="Murphy L."/>
            <person name="Rutter S."/>
            <person name="Squares R."/>
            <person name="Quail M.A."/>
            <person name="Saunders E."/>
            <person name="Mavromatis K."/>
            <person name="Brettin T.S."/>
            <person name="Bentley S.D."/>
            <person name="Hothersall J."/>
            <person name="Stephens E."/>
            <person name="Thomas C.M."/>
            <person name="Parkhill J."/>
            <person name="Levy S.B."/>
            <person name="Rainey P.B."/>
            <person name="Thomson N.R."/>
        </authorList>
    </citation>
    <scope>NUCLEOTIDE SEQUENCE [LARGE SCALE GENOMIC DNA]</scope>
    <source>
        <strain>Pf0-1</strain>
    </source>
</reference>
<dbReference type="EMBL" id="CP000094">
    <property type="protein sequence ID" value="ABA75971.1"/>
    <property type="molecule type" value="Genomic_DNA"/>
</dbReference>
<dbReference type="RefSeq" id="WP_007957760.1">
    <property type="nucleotide sequence ID" value="NC_007492.2"/>
</dbReference>
<dbReference type="KEGG" id="pfo:Pfl01_4234"/>
<dbReference type="eggNOG" id="COG3091">
    <property type="taxonomic scope" value="Bacteria"/>
</dbReference>
<dbReference type="HOGENOM" id="CLU_113336_0_1_6"/>
<dbReference type="Proteomes" id="UP000002704">
    <property type="component" value="Chromosome"/>
</dbReference>
<dbReference type="GO" id="GO:0005737">
    <property type="term" value="C:cytoplasm"/>
    <property type="evidence" value="ECO:0007669"/>
    <property type="project" value="UniProtKB-SubCell"/>
</dbReference>
<dbReference type="GO" id="GO:0008270">
    <property type="term" value="F:zinc ion binding"/>
    <property type="evidence" value="ECO:0007669"/>
    <property type="project" value="UniProtKB-UniRule"/>
</dbReference>
<dbReference type="GO" id="GO:0006950">
    <property type="term" value="P:response to stress"/>
    <property type="evidence" value="ECO:0007669"/>
    <property type="project" value="UniProtKB-ARBA"/>
</dbReference>
<dbReference type="HAMAP" id="MF_00746">
    <property type="entry name" value="SprT"/>
    <property type="match status" value="1"/>
</dbReference>
<dbReference type="InterPro" id="IPR006640">
    <property type="entry name" value="SprT-like_domain"/>
</dbReference>
<dbReference type="InterPro" id="IPR023483">
    <property type="entry name" value="Uncharacterised_SprT"/>
</dbReference>
<dbReference type="NCBIfam" id="NF003421">
    <property type="entry name" value="PRK04860.1"/>
    <property type="match status" value="1"/>
</dbReference>
<dbReference type="PANTHER" id="PTHR38773">
    <property type="entry name" value="PROTEIN SPRT"/>
    <property type="match status" value="1"/>
</dbReference>
<dbReference type="PANTHER" id="PTHR38773:SF1">
    <property type="entry name" value="PROTEIN SPRT"/>
    <property type="match status" value="1"/>
</dbReference>
<dbReference type="Pfam" id="PF10263">
    <property type="entry name" value="SprT-like"/>
    <property type="match status" value="1"/>
</dbReference>
<dbReference type="SMART" id="SM00731">
    <property type="entry name" value="SprT"/>
    <property type="match status" value="1"/>
</dbReference>
<dbReference type="PROSITE" id="PS00142">
    <property type="entry name" value="ZINC_PROTEASE"/>
    <property type="match status" value="1"/>
</dbReference>
<accession>Q3K8D3</accession>
<feature type="chain" id="PRO_1000046536" description="Protein SprT">
    <location>
        <begin position="1"/>
        <end position="164"/>
    </location>
</feature>
<feature type="domain" description="SprT-like" evidence="1">
    <location>
        <begin position="14"/>
        <end position="156"/>
    </location>
</feature>
<feature type="active site" evidence="1">
    <location>
        <position position="70"/>
    </location>
</feature>
<feature type="binding site" evidence="1">
    <location>
        <position position="69"/>
    </location>
    <ligand>
        <name>Zn(2+)</name>
        <dbReference type="ChEBI" id="CHEBI:29105"/>
    </ligand>
</feature>
<feature type="binding site" evidence="1">
    <location>
        <position position="73"/>
    </location>
    <ligand>
        <name>Zn(2+)</name>
        <dbReference type="ChEBI" id="CHEBI:29105"/>
    </ligand>
</feature>
<sequence length="164" mass="19539">MPEQLNTRVEDCFQLAESFFKRPFKRPVVSLKLRGQKAGVAHLHENLLRFNPQLYRENTEHFLKQTVAHEVAHLIAHQLFGDRIQPHGEEWQLIMRGVYELPPDRCHTYEVKRRSVTRYIYKCPCADSDFPFSAQRHSLVRQGRRYLCRRCRNTLVFSGEMRVE</sequence>
<gene>
    <name evidence="1" type="primary">sprT</name>
    <name type="ordered locus">Pfl01_4234</name>
</gene>
<proteinExistence type="inferred from homology"/>
<name>SPRT_PSEPF</name>
<organism>
    <name type="scientific">Pseudomonas fluorescens (strain Pf0-1)</name>
    <dbReference type="NCBI Taxonomy" id="205922"/>
    <lineage>
        <taxon>Bacteria</taxon>
        <taxon>Pseudomonadati</taxon>
        <taxon>Pseudomonadota</taxon>
        <taxon>Gammaproteobacteria</taxon>
        <taxon>Pseudomonadales</taxon>
        <taxon>Pseudomonadaceae</taxon>
        <taxon>Pseudomonas</taxon>
    </lineage>
</organism>